<feature type="chain" id="PRO_0000417115" description="CRISPR-associated exonuclease Cas4/endonuclease Cas1 fusion">
    <location>
        <begin position="1"/>
        <end position="541"/>
    </location>
</feature>
<feature type="region of interest" description="CRISPR-associated exonuclease Cas4">
    <location>
        <begin position="1"/>
        <end position="179"/>
    </location>
</feature>
<feature type="region of interest" description="CRISPR-associated endonuclease Cas1">
    <location>
        <begin position="204"/>
        <end position="541"/>
    </location>
</feature>
<feature type="binding site" evidence="3">
    <location>
        <position position="9"/>
    </location>
    <ligand>
        <name>[4Fe-4S] cluster</name>
        <dbReference type="ChEBI" id="CHEBI:49883"/>
    </ligand>
</feature>
<feature type="binding site" evidence="3">
    <location>
        <position position="65"/>
    </location>
    <ligand>
        <name>Mn(2+)</name>
        <dbReference type="ChEBI" id="CHEBI:29035"/>
        <label>1</label>
    </ligand>
</feature>
<feature type="binding site" evidence="3">
    <location>
        <position position="78"/>
    </location>
    <ligand>
        <name>Mn(2+)</name>
        <dbReference type="ChEBI" id="CHEBI:29035"/>
        <label>1</label>
    </ligand>
</feature>
<feature type="binding site" evidence="3">
    <location>
        <position position="168"/>
    </location>
    <ligand>
        <name>[4Fe-4S] cluster</name>
        <dbReference type="ChEBI" id="CHEBI:49883"/>
    </ligand>
</feature>
<feature type="binding site" evidence="3">
    <location>
        <position position="171"/>
    </location>
    <ligand>
        <name>[4Fe-4S] cluster</name>
        <dbReference type="ChEBI" id="CHEBI:49883"/>
    </ligand>
</feature>
<feature type="binding site" evidence="3">
    <location>
        <position position="177"/>
    </location>
    <ligand>
        <name>[4Fe-4S] cluster</name>
        <dbReference type="ChEBI" id="CHEBI:49883"/>
    </ligand>
</feature>
<feature type="binding site" evidence="2">
    <location>
        <position position="365"/>
    </location>
    <ligand>
        <name>Mn(2+)</name>
        <dbReference type="ChEBI" id="CHEBI:29035"/>
        <label>2</label>
    </ligand>
</feature>
<feature type="binding site" evidence="2">
    <location>
        <position position="433"/>
    </location>
    <ligand>
        <name>Mn(2+)</name>
        <dbReference type="ChEBI" id="CHEBI:29035"/>
        <label>2</label>
    </ligand>
</feature>
<feature type="binding site" evidence="2">
    <location>
        <position position="448"/>
    </location>
    <ligand>
        <name>Mn(2+)</name>
        <dbReference type="ChEBI" id="CHEBI:29035"/>
        <label>2</label>
    </ligand>
</feature>
<keyword id="KW-0004">4Fe-4S</keyword>
<keyword id="KW-0051">Antiviral defense</keyword>
<keyword id="KW-0238">DNA-binding</keyword>
<keyword id="KW-0255">Endonuclease</keyword>
<keyword id="KW-0269">Exonuclease</keyword>
<keyword id="KW-0378">Hydrolase</keyword>
<keyword id="KW-0408">Iron</keyword>
<keyword id="KW-0411">Iron-sulfur</keyword>
<keyword id="KW-0460">Magnesium</keyword>
<keyword id="KW-0464">Manganese</keyword>
<keyword id="KW-0479">Metal-binding</keyword>
<keyword id="KW-0540">Nuclease</keyword>
<keyword id="KW-1185">Reference proteome</keyword>
<organism>
    <name type="scientific">Leptospira interrogans serogroup Icterohaemorrhagiae serovar Lai (strain 56601)</name>
    <dbReference type="NCBI Taxonomy" id="189518"/>
    <lineage>
        <taxon>Bacteria</taxon>
        <taxon>Pseudomonadati</taxon>
        <taxon>Spirochaetota</taxon>
        <taxon>Spirochaetia</taxon>
        <taxon>Leptospirales</taxon>
        <taxon>Leptospiraceae</taxon>
        <taxon>Leptospira</taxon>
    </lineage>
</organism>
<protein>
    <recommendedName>
        <fullName>CRISPR-associated exonuclease Cas4/endonuclease Cas1 fusion</fullName>
        <ecNumber>3.1.-.-</ecNumber>
        <ecNumber>3.1.12.1</ecNumber>
    </recommendedName>
</protein>
<sequence>MGIHSLLYCERLFYLEEVEGILVADDRVYAGRTLHEELEPNEDSSGRIESFHYTSEKLEVSGKVDRIQKRDGDWIPYEHKRGRARIGTNGPEAWESDQCQVTVYALLLEEATGRNISEGKIRYHGSKDLVKIEIDEELRSKALKTIDRAKGLSTSTNRPPVAQNENLCKNCSLAPVCLPEETRVITENEYEPIRLFPEKREKTTLHVFGHDSRIKKSDNVLLVEKVTETGEKSKSEKIPIQEIESVNIHGNCQISSQMIKFLVSEEIPVHWFSGGGNYIGGININPSGVQRRIRQFKALTKETIRLNLAKKLVSAKCESQLRYLLRATRGKDETRNETESYLATIRSGLKNIESADSPSQLLGIEGSSARAYFSGLPALLKNSDPFLVPNGRSKRPPKDPFNATLSFLYSLLYKSVRQAIIAVGLDPSFGFYHTPRSSAEPLVLDLMELFRVSLCDMTLIGSINRKSWIDEDFEITKNKVWLSESGRKKATQLYETRLDDTWKHPVVNYSLSYYRMIELEVRLLEKEWSGEANIFAQARLR</sequence>
<name>CS4F1_LEPIN</name>
<accession>Q8F1F5</accession>
<proteinExistence type="inferred from homology"/>
<gene>
    <name type="primary">cas4-cas1</name>
    <name type="ordered locus">LA_3181</name>
</gene>
<evidence type="ECO:0000250" key="1"/>
<evidence type="ECO:0000250" key="2">
    <source>
        <dbReference type="UniProtKB" id="Q02ML7"/>
    </source>
</evidence>
<evidence type="ECO:0000250" key="3">
    <source>
        <dbReference type="UniProtKB" id="Q97TX9"/>
    </source>
</evidence>
<evidence type="ECO:0000305" key="4"/>
<reference key="1">
    <citation type="journal article" date="2003" name="Nature">
        <title>Unique physiological and pathogenic features of Leptospira interrogans revealed by whole-genome sequencing.</title>
        <authorList>
            <person name="Ren S.-X."/>
            <person name="Fu G."/>
            <person name="Jiang X.-G."/>
            <person name="Zeng R."/>
            <person name="Miao Y.-G."/>
            <person name="Xu H."/>
            <person name="Zhang Y.-X."/>
            <person name="Xiong H."/>
            <person name="Lu G."/>
            <person name="Lu L.-F."/>
            <person name="Jiang H.-Q."/>
            <person name="Jia J."/>
            <person name="Tu Y.-F."/>
            <person name="Jiang J.-X."/>
            <person name="Gu W.-Y."/>
            <person name="Zhang Y.-Q."/>
            <person name="Cai Z."/>
            <person name="Sheng H.-H."/>
            <person name="Yin H.-F."/>
            <person name="Zhang Y."/>
            <person name="Zhu G.-F."/>
            <person name="Wan M."/>
            <person name="Huang H.-L."/>
            <person name="Qian Z."/>
            <person name="Wang S.-Y."/>
            <person name="Ma W."/>
            <person name="Yao Z.-J."/>
            <person name="Shen Y."/>
            <person name="Qiang B.-Q."/>
            <person name="Xia Q.-C."/>
            <person name="Guo X.-K."/>
            <person name="Danchin A."/>
            <person name="Saint Girons I."/>
            <person name="Somerville R.L."/>
            <person name="Wen Y.-M."/>
            <person name="Shi M.-H."/>
            <person name="Chen Z."/>
            <person name="Xu J.-G."/>
            <person name="Zhao G.-P."/>
        </authorList>
    </citation>
    <scope>NUCLEOTIDE SEQUENCE [LARGE SCALE GENOMIC DNA]</scope>
    <source>
        <strain>56601</strain>
    </source>
</reference>
<comment type="function">
    <text evidence="1 3">CRISPR (clustered regularly interspaced short palindromic repeat), is an adaptive immune system that provides protection against mobile genetic elements (viruses, transposable elements and conjugative plasmids). CRISPR clusters contain spacers, sequences complementary to antecedent mobile elements, and target invading nucleic acids. CRISPR clusters are transcribed and processed into CRISPR RNA (crRNA) (By similarity). The Cas4 region acts as a ssDNA exonuclease, while the Cas1 region acts as a dsDNA endonuclease. Involved in the integration of spacer DNA into the CRISPR cassette (By similarity).</text>
</comment>
<comment type="catalytic activity">
    <reaction>
        <text>exonucleolytic cleavage in the 5'- to 3'-direction to yield nucleoside 3'-phosphates.</text>
        <dbReference type="EC" id="3.1.12.1"/>
    </reaction>
</comment>
<comment type="cofactor">
    <cofactor evidence="3">
        <name>[4Fe-4S] cluster</name>
        <dbReference type="ChEBI" id="CHEBI:49883"/>
    </cofactor>
    <text evidence="3">Binds 1 [4Fe-4S] cluster per subunit.</text>
</comment>
<comment type="cofactor">
    <cofactor evidence="1">
        <name>Mg(2+)</name>
        <dbReference type="ChEBI" id="CHEBI:18420"/>
    </cofactor>
    <cofactor evidence="1">
        <name>Mn(2+)</name>
        <dbReference type="ChEBI" id="CHEBI:29035"/>
    </cofactor>
</comment>
<comment type="subunit">
    <text evidence="1">Homodimer, forms a heterotetramer with a Cas2 homodimer.</text>
</comment>
<comment type="similarity">
    <text evidence="4">In the N-terminal section; belongs to the CRISPR-associated exonuclease Cas4 family.</text>
</comment>
<comment type="similarity">
    <text evidence="4">In the C-terminal section; belongs to the CRISPR-associated endonuclease Cas1 family.</text>
</comment>
<dbReference type="EC" id="3.1.-.-"/>
<dbReference type="EC" id="3.1.12.1"/>
<dbReference type="EMBL" id="AE010300">
    <property type="protein sequence ID" value="AAN50379.2"/>
    <property type="molecule type" value="Genomic_DNA"/>
</dbReference>
<dbReference type="RefSeq" id="NP_713361.2">
    <property type="nucleotide sequence ID" value="NC_004342.2"/>
</dbReference>
<dbReference type="RefSeq" id="WP_002068643.1">
    <property type="nucleotide sequence ID" value="NC_004342.2"/>
</dbReference>
<dbReference type="SMR" id="Q8F1F5"/>
<dbReference type="STRING" id="189518.LA_3181"/>
<dbReference type="PaxDb" id="189518-LA_3181"/>
<dbReference type="EnsemblBacteria" id="AAN50379">
    <property type="protein sequence ID" value="AAN50379"/>
    <property type="gene ID" value="LA_3181"/>
</dbReference>
<dbReference type="KEGG" id="lil:LA_3181"/>
<dbReference type="PATRIC" id="fig|189518.3.peg.3158"/>
<dbReference type="HOGENOM" id="CLU_466793_0_0_12"/>
<dbReference type="InParanoid" id="Q8F1F5"/>
<dbReference type="OrthoDB" id="9803119at2"/>
<dbReference type="Proteomes" id="UP000001408">
    <property type="component" value="Chromosome I"/>
</dbReference>
<dbReference type="GO" id="GO:0051539">
    <property type="term" value="F:4 iron, 4 sulfur cluster binding"/>
    <property type="evidence" value="ECO:0007669"/>
    <property type="project" value="UniProtKB-KW"/>
</dbReference>
<dbReference type="GO" id="GO:0003677">
    <property type="term" value="F:DNA binding"/>
    <property type="evidence" value="ECO:0007669"/>
    <property type="project" value="UniProtKB-KW"/>
</dbReference>
<dbReference type="GO" id="GO:0004520">
    <property type="term" value="F:DNA endonuclease activity"/>
    <property type="evidence" value="ECO:0007669"/>
    <property type="project" value="InterPro"/>
</dbReference>
<dbReference type="GO" id="GO:0004519">
    <property type="term" value="F:endonuclease activity"/>
    <property type="evidence" value="ECO:0000318"/>
    <property type="project" value="GO_Central"/>
</dbReference>
<dbReference type="GO" id="GO:0004527">
    <property type="term" value="F:exonuclease activity"/>
    <property type="evidence" value="ECO:0007669"/>
    <property type="project" value="UniProtKB-KW"/>
</dbReference>
<dbReference type="GO" id="GO:0046872">
    <property type="term" value="F:metal ion binding"/>
    <property type="evidence" value="ECO:0007669"/>
    <property type="project" value="UniProtKB-UniRule"/>
</dbReference>
<dbReference type="GO" id="GO:0099048">
    <property type="term" value="P:CRISPR-cas system"/>
    <property type="evidence" value="ECO:0000318"/>
    <property type="project" value="GO_Central"/>
</dbReference>
<dbReference type="GO" id="GO:0051607">
    <property type="term" value="P:defense response to virus"/>
    <property type="evidence" value="ECO:0007669"/>
    <property type="project" value="UniProtKB-UniRule"/>
</dbReference>
<dbReference type="GO" id="GO:0043571">
    <property type="term" value="P:maintenance of CRISPR repeat elements"/>
    <property type="evidence" value="ECO:0000318"/>
    <property type="project" value="GO_Central"/>
</dbReference>
<dbReference type="CDD" id="cd09634">
    <property type="entry name" value="Cas1_I-II-III"/>
    <property type="match status" value="1"/>
</dbReference>
<dbReference type="Gene3D" id="3.90.320.10">
    <property type="match status" value="1"/>
</dbReference>
<dbReference type="Gene3D" id="1.20.120.920">
    <property type="entry name" value="CRISPR-associated endonuclease Cas1, C-terminal domain"/>
    <property type="match status" value="1"/>
</dbReference>
<dbReference type="Gene3D" id="3.100.10.20">
    <property type="entry name" value="CRISPR-associated endonuclease Cas1, N-terminal domain"/>
    <property type="match status" value="1"/>
</dbReference>
<dbReference type="HAMAP" id="MF_01470">
    <property type="entry name" value="Cas1"/>
    <property type="match status" value="1"/>
</dbReference>
<dbReference type="InterPro" id="IPR050646">
    <property type="entry name" value="Cas1"/>
</dbReference>
<dbReference type="InterPro" id="IPR002729">
    <property type="entry name" value="CRISPR-assoc_Cas1"/>
</dbReference>
<dbReference type="InterPro" id="IPR042206">
    <property type="entry name" value="CRISPR-assoc_Cas1_C"/>
</dbReference>
<dbReference type="InterPro" id="IPR023844">
    <property type="entry name" value="CRISPR-assoc_Cas1_MYXAN"/>
</dbReference>
<dbReference type="InterPro" id="IPR042211">
    <property type="entry name" value="CRISPR-assoc_Cas1_N"/>
</dbReference>
<dbReference type="InterPro" id="IPR013343">
    <property type="entry name" value="CRISPR-assoc_prot_Cas4"/>
</dbReference>
<dbReference type="InterPro" id="IPR022765">
    <property type="entry name" value="Dna2/Cas4_DUF83"/>
</dbReference>
<dbReference type="InterPro" id="IPR011604">
    <property type="entry name" value="PDDEXK-like_dom_sf"/>
</dbReference>
<dbReference type="NCBIfam" id="TIGR00287">
    <property type="entry name" value="cas1"/>
    <property type="match status" value="1"/>
</dbReference>
<dbReference type="NCBIfam" id="TIGR03983">
    <property type="entry name" value="cas1_MYXAN"/>
    <property type="match status" value="1"/>
</dbReference>
<dbReference type="NCBIfam" id="TIGR00372">
    <property type="entry name" value="cas4"/>
    <property type="match status" value="1"/>
</dbReference>
<dbReference type="PANTHER" id="PTHR34353">
    <property type="entry name" value="CRISPR-ASSOCIATED ENDONUCLEASE CAS1 1"/>
    <property type="match status" value="1"/>
</dbReference>
<dbReference type="PANTHER" id="PTHR34353:SF2">
    <property type="entry name" value="CRISPR-ASSOCIATED ENDONUCLEASE CAS1 1"/>
    <property type="match status" value="1"/>
</dbReference>
<dbReference type="Pfam" id="PF01867">
    <property type="entry name" value="Cas_Cas1"/>
    <property type="match status" value="1"/>
</dbReference>
<dbReference type="Pfam" id="PF01930">
    <property type="entry name" value="Cas_Cas4"/>
    <property type="match status" value="1"/>
</dbReference>